<sequence length="278" mass="32356">MTVLHSVDFFPSGNASVAIEPRLPQADFPEHHHDFHEIVIVEHGTGIHVFNGQPYTITGGTVCFVRDHDRHLYEHTDNLCLTNVLYRSPDRFQFLAGLNQLLPQEQDGQYPSHWRVNYSVLQQVRQLVAQMEQQEGENDLPSTASREILFMQLLLLLRKSSLQENLENSASRLNLLLAWLEDHFADEVNWDAVADQFSLSLRTLHRQLKQQTGLTPQRYLNRLRLMKARHLLRHSEASVTDIAYRCGFSDSNHFSTLFRREFNWSPRDIRQGRDGFLQ</sequence>
<organism>
    <name type="scientific">Escherichia coli O6:H1 (strain CFT073 / ATCC 700928 / UPEC)</name>
    <dbReference type="NCBI Taxonomy" id="199310"/>
    <lineage>
        <taxon>Bacteria</taxon>
        <taxon>Pseudomonadati</taxon>
        <taxon>Pseudomonadota</taxon>
        <taxon>Gammaproteobacteria</taxon>
        <taxon>Enterobacterales</taxon>
        <taxon>Enterobacteriaceae</taxon>
        <taxon>Escherichia</taxon>
    </lineage>
</organism>
<name>RHAS_ECOL6</name>
<protein>
    <recommendedName>
        <fullName evidence="1">HTH-type transcriptional activator RhaS</fullName>
    </recommendedName>
    <alternativeName>
        <fullName evidence="1">L-rhamnose operon regulatory protein RhaS</fullName>
    </alternativeName>
</protein>
<reference key="1">
    <citation type="journal article" date="2002" name="Proc. Natl. Acad. Sci. U.S.A.">
        <title>Extensive mosaic structure revealed by the complete genome sequence of uropathogenic Escherichia coli.</title>
        <authorList>
            <person name="Welch R.A."/>
            <person name="Burland V."/>
            <person name="Plunkett G. III"/>
            <person name="Redford P."/>
            <person name="Roesch P."/>
            <person name="Rasko D."/>
            <person name="Buckles E.L."/>
            <person name="Liou S.-R."/>
            <person name="Boutin A."/>
            <person name="Hackett J."/>
            <person name="Stroud D."/>
            <person name="Mayhew G.F."/>
            <person name="Rose D.J."/>
            <person name="Zhou S."/>
            <person name="Schwartz D.C."/>
            <person name="Perna N.T."/>
            <person name="Mobley H.L.T."/>
            <person name="Donnenberg M.S."/>
            <person name="Blattner F.R."/>
        </authorList>
    </citation>
    <scope>NUCLEOTIDE SEQUENCE [LARGE SCALE GENOMIC DNA]</scope>
    <source>
        <strain>CFT073 / ATCC 700928 / UPEC</strain>
    </source>
</reference>
<proteinExistence type="inferred from homology"/>
<dbReference type="EMBL" id="AE014075">
    <property type="protein sequence ID" value="AAN83283.1"/>
    <property type="molecule type" value="Genomic_DNA"/>
</dbReference>
<dbReference type="RefSeq" id="WP_000217158.1">
    <property type="nucleotide sequence ID" value="NZ_CP051263.1"/>
</dbReference>
<dbReference type="SMR" id="Q8CXW5"/>
<dbReference type="STRING" id="199310.c4855"/>
<dbReference type="KEGG" id="ecc:c4855"/>
<dbReference type="eggNOG" id="COG4977">
    <property type="taxonomic scope" value="Bacteria"/>
</dbReference>
<dbReference type="HOGENOM" id="CLU_000445_88_5_6"/>
<dbReference type="BioCyc" id="ECOL199310:C4855-MONOMER"/>
<dbReference type="Proteomes" id="UP000001410">
    <property type="component" value="Chromosome"/>
</dbReference>
<dbReference type="GO" id="GO:0005737">
    <property type="term" value="C:cytoplasm"/>
    <property type="evidence" value="ECO:0007669"/>
    <property type="project" value="UniProtKB-SubCell"/>
</dbReference>
<dbReference type="GO" id="GO:0003700">
    <property type="term" value="F:DNA-binding transcription factor activity"/>
    <property type="evidence" value="ECO:0007669"/>
    <property type="project" value="UniProtKB-UniRule"/>
</dbReference>
<dbReference type="GO" id="GO:0043565">
    <property type="term" value="F:sequence-specific DNA binding"/>
    <property type="evidence" value="ECO:0007669"/>
    <property type="project" value="InterPro"/>
</dbReference>
<dbReference type="GO" id="GO:0045893">
    <property type="term" value="P:positive regulation of DNA-templated transcription"/>
    <property type="evidence" value="ECO:0007669"/>
    <property type="project" value="UniProtKB-UniRule"/>
</dbReference>
<dbReference type="GO" id="GO:0019299">
    <property type="term" value="P:rhamnose metabolic process"/>
    <property type="evidence" value="ECO:0007669"/>
    <property type="project" value="UniProtKB-UniRule"/>
</dbReference>
<dbReference type="CDD" id="cd06977">
    <property type="entry name" value="cupin_RhaR_RhaS-like_N"/>
    <property type="match status" value="1"/>
</dbReference>
<dbReference type="FunFam" id="1.10.10.60:FF:000181">
    <property type="entry name" value="HTH-type transcriptional activator RhaS"/>
    <property type="match status" value="1"/>
</dbReference>
<dbReference type="FunFam" id="2.60.120.10:FF:000041">
    <property type="entry name" value="HTH-type transcriptional activator RhaS"/>
    <property type="match status" value="1"/>
</dbReference>
<dbReference type="Gene3D" id="1.10.10.60">
    <property type="entry name" value="Homeodomain-like"/>
    <property type="match status" value="1"/>
</dbReference>
<dbReference type="Gene3D" id="2.60.120.10">
    <property type="entry name" value="Jelly Rolls"/>
    <property type="match status" value="1"/>
</dbReference>
<dbReference type="HAMAP" id="MF_01534">
    <property type="entry name" value="HTH_type_RhaS"/>
    <property type="match status" value="1"/>
</dbReference>
<dbReference type="InterPro" id="IPR003313">
    <property type="entry name" value="AraC-bd"/>
</dbReference>
<dbReference type="InterPro" id="IPR050204">
    <property type="entry name" value="AraC_XylS_family_regulators"/>
</dbReference>
<dbReference type="InterPro" id="IPR009057">
    <property type="entry name" value="Homeodomain-like_sf"/>
</dbReference>
<dbReference type="InterPro" id="IPR037923">
    <property type="entry name" value="HTH-like"/>
</dbReference>
<dbReference type="InterPro" id="IPR018060">
    <property type="entry name" value="HTH_AraC"/>
</dbReference>
<dbReference type="InterPro" id="IPR018062">
    <property type="entry name" value="HTH_AraC-typ_CS"/>
</dbReference>
<dbReference type="InterPro" id="IPR047220">
    <property type="entry name" value="RhaR_RhaS-like_N"/>
</dbReference>
<dbReference type="InterPro" id="IPR014710">
    <property type="entry name" value="RmlC-like_jellyroll"/>
</dbReference>
<dbReference type="InterPro" id="IPR020449">
    <property type="entry name" value="Tscrpt_reg_AraC-type_HTH"/>
</dbReference>
<dbReference type="InterPro" id="IPR023609">
    <property type="entry name" value="Tscrpt_reg_HTH_RhaS"/>
</dbReference>
<dbReference type="NCBIfam" id="NF010028">
    <property type="entry name" value="PRK13503.1"/>
    <property type="match status" value="1"/>
</dbReference>
<dbReference type="PANTHER" id="PTHR46796:SF13">
    <property type="entry name" value="HTH-TYPE TRANSCRIPTIONAL ACTIVATOR RHAS"/>
    <property type="match status" value="1"/>
</dbReference>
<dbReference type="PANTHER" id="PTHR46796">
    <property type="entry name" value="HTH-TYPE TRANSCRIPTIONAL ACTIVATOR RHAS-RELATED"/>
    <property type="match status" value="1"/>
</dbReference>
<dbReference type="Pfam" id="PF02311">
    <property type="entry name" value="AraC_binding"/>
    <property type="match status" value="1"/>
</dbReference>
<dbReference type="Pfam" id="PF12833">
    <property type="entry name" value="HTH_18"/>
    <property type="match status" value="1"/>
</dbReference>
<dbReference type="PRINTS" id="PR00032">
    <property type="entry name" value="HTHARAC"/>
</dbReference>
<dbReference type="SMART" id="SM00342">
    <property type="entry name" value="HTH_ARAC"/>
    <property type="match status" value="1"/>
</dbReference>
<dbReference type="SUPFAM" id="SSF46689">
    <property type="entry name" value="Homeodomain-like"/>
    <property type="match status" value="2"/>
</dbReference>
<dbReference type="SUPFAM" id="SSF51215">
    <property type="entry name" value="Regulatory protein AraC"/>
    <property type="match status" value="1"/>
</dbReference>
<dbReference type="PROSITE" id="PS00041">
    <property type="entry name" value="HTH_ARAC_FAMILY_1"/>
    <property type="match status" value="1"/>
</dbReference>
<dbReference type="PROSITE" id="PS01124">
    <property type="entry name" value="HTH_ARAC_FAMILY_2"/>
    <property type="match status" value="1"/>
</dbReference>
<accession>Q8CXW5</accession>
<gene>
    <name evidence="1" type="primary">rhaS</name>
    <name type="ordered locus">c4855</name>
</gene>
<keyword id="KW-0010">Activator</keyword>
<keyword id="KW-0963">Cytoplasm</keyword>
<keyword id="KW-0238">DNA-binding</keyword>
<keyword id="KW-1185">Reference proteome</keyword>
<keyword id="KW-0677">Repeat</keyword>
<keyword id="KW-0684">Rhamnose metabolism</keyword>
<keyword id="KW-0804">Transcription</keyword>
<keyword id="KW-0805">Transcription regulation</keyword>
<evidence type="ECO:0000255" key="1">
    <source>
        <dbReference type="HAMAP-Rule" id="MF_01534"/>
    </source>
</evidence>
<comment type="function">
    <text evidence="1">Activates expression of the rhaBAD and rhaT operons.</text>
</comment>
<comment type="subunit">
    <text evidence="1">Binds DNA as a dimer.</text>
</comment>
<comment type="subcellular location">
    <subcellularLocation>
        <location evidence="1">Cytoplasm</location>
    </subcellularLocation>
</comment>
<feature type="chain" id="PRO_0000194564" description="HTH-type transcriptional activator RhaS">
    <location>
        <begin position="1"/>
        <end position="278"/>
    </location>
</feature>
<feature type="domain" description="HTH araC/xylS-type" evidence="1">
    <location>
        <begin position="174"/>
        <end position="272"/>
    </location>
</feature>
<feature type="DNA-binding region" description="H-T-H motif" evidence="1">
    <location>
        <begin position="191"/>
        <end position="212"/>
    </location>
</feature>
<feature type="DNA-binding region" description="H-T-H motif" evidence="1">
    <location>
        <begin position="239"/>
        <end position="262"/>
    </location>
</feature>
<feature type="site" description="Interaction with sigma-70" evidence="1">
    <location>
        <position position="241"/>
    </location>
</feature>
<feature type="site" description="Interaction with sigma-70" evidence="1">
    <location>
        <position position="250"/>
    </location>
</feature>